<organism>
    <name type="scientific">Bacillus thuringiensis subsp. konkukian (strain 97-27)</name>
    <dbReference type="NCBI Taxonomy" id="281309"/>
    <lineage>
        <taxon>Bacteria</taxon>
        <taxon>Bacillati</taxon>
        <taxon>Bacillota</taxon>
        <taxon>Bacilli</taxon>
        <taxon>Bacillales</taxon>
        <taxon>Bacillaceae</taxon>
        <taxon>Bacillus</taxon>
        <taxon>Bacillus cereus group</taxon>
    </lineage>
</organism>
<evidence type="ECO:0000255" key="1">
    <source>
        <dbReference type="HAMAP-Rule" id="MF_00394"/>
    </source>
</evidence>
<reference key="1">
    <citation type="journal article" date="2006" name="J. Bacteriol.">
        <title>Pathogenomic sequence analysis of Bacillus cereus and Bacillus thuringiensis isolates closely related to Bacillus anthracis.</title>
        <authorList>
            <person name="Han C.S."/>
            <person name="Xie G."/>
            <person name="Challacombe J.F."/>
            <person name="Altherr M.R."/>
            <person name="Bhotika S.S."/>
            <person name="Bruce D."/>
            <person name="Campbell C.S."/>
            <person name="Campbell M.L."/>
            <person name="Chen J."/>
            <person name="Chertkov O."/>
            <person name="Cleland C."/>
            <person name="Dimitrijevic M."/>
            <person name="Doggett N.A."/>
            <person name="Fawcett J.J."/>
            <person name="Glavina T."/>
            <person name="Goodwin L.A."/>
            <person name="Hill K.K."/>
            <person name="Hitchcock P."/>
            <person name="Jackson P.J."/>
            <person name="Keim P."/>
            <person name="Kewalramani A.R."/>
            <person name="Longmire J."/>
            <person name="Lucas S."/>
            <person name="Malfatti S."/>
            <person name="McMurry K."/>
            <person name="Meincke L.J."/>
            <person name="Misra M."/>
            <person name="Moseman B.L."/>
            <person name="Mundt M."/>
            <person name="Munk A.C."/>
            <person name="Okinaka R.T."/>
            <person name="Parson-Quintana B."/>
            <person name="Reilly L.P."/>
            <person name="Richardson P."/>
            <person name="Robinson D.L."/>
            <person name="Rubin E."/>
            <person name="Saunders E."/>
            <person name="Tapia R."/>
            <person name="Tesmer J.G."/>
            <person name="Thayer N."/>
            <person name="Thompson L.S."/>
            <person name="Tice H."/>
            <person name="Ticknor L.O."/>
            <person name="Wills P.L."/>
            <person name="Brettin T.S."/>
            <person name="Gilna P."/>
        </authorList>
    </citation>
    <scope>NUCLEOTIDE SEQUENCE [LARGE SCALE GENOMIC DNA]</scope>
    <source>
        <strain>97-27</strain>
    </source>
</reference>
<dbReference type="EC" id="1.1.1.94" evidence="1"/>
<dbReference type="EMBL" id="AE017355">
    <property type="protein sequence ID" value="AAT63228.1"/>
    <property type="molecule type" value="Genomic_DNA"/>
</dbReference>
<dbReference type="RefSeq" id="WP_000161776.1">
    <property type="nucleotide sequence ID" value="NC_005957.1"/>
</dbReference>
<dbReference type="RefSeq" id="YP_035721.1">
    <property type="nucleotide sequence ID" value="NC_005957.1"/>
</dbReference>
<dbReference type="SMR" id="Q6HL50"/>
<dbReference type="KEGG" id="btk:BT9727_1387"/>
<dbReference type="PATRIC" id="fig|281309.8.peg.1459"/>
<dbReference type="HOGENOM" id="CLU_033449_0_2_9"/>
<dbReference type="UniPathway" id="UPA00940"/>
<dbReference type="Proteomes" id="UP000001301">
    <property type="component" value="Chromosome"/>
</dbReference>
<dbReference type="GO" id="GO:0005829">
    <property type="term" value="C:cytosol"/>
    <property type="evidence" value="ECO:0007669"/>
    <property type="project" value="TreeGrafter"/>
</dbReference>
<dbReference type="GO" id="GO:0047952">
    <property type="term" value="F:glycerol-3-phosphate dehydrogenase [NAD(P)+] activity"/>
    <property type="evidence" value="ECO:0007669"/>
    <property type="project" value="UniProtKB-UniRule"/>
</dbReference>
<dbReference type="GO" id="GO:0051287">
    <property type="term" value="F:NAD binding"/>
    <property type="evidence" value="ECO:0007669"/>
    <property type="project" value="InterPro"/>
</dbReference>
<dbReference type="GO" id="GO:0005975">
    <property type="term" value="P:carbohydrate metabolic process"/>
    <property type="evidence" value="ECO:0007669"/>
    <property type="project" value="InterPro"/>
</dbReference>
<dbReference type="GO" id="GO:0046167">
    <property type="term" value="P:glycerol-3-phosphate biosynthetic process"/>
    <property type="evidence" value="ECO:0007669"/>
    <property type="project" value="UniProtKB-UniRule"/>
</dbReference>
<dbReference type="GO" id="GO:0046168">
    <property type="term" value="P:glycerol-3-phosphate catabolic process"/>
    <property type="evidence" value="ECO:0007669"/>
    <property type="project" value="InterPro"/>
</dbReference>
<dbReference type="GO" id="GO:0006650">
    <property type="term" value="P:glycerophospholipid metabolic process"/>
    <property type="evidence" value="ECO:0007669"/>
    <property type="project" value="UniProtKB-UniRule"/>
</dbReference>
<dbReference type="GO" id="GO:0008654">
    <property type="term" value="P:phospholipid biosynthetic process"/>
    <property type="evidence" value="ECO:0007669"/>
    <property type="project" value="UniProtKB-KW"/>
</dbReference>
<dbReference type="FunFam" id="1.10.1040.10:FF:000001">
    <property type="entry name" value="Glycerol-3-phosphate dehydrogenase [NAD(P)+]"/>
    <property type="match status" value="1"/>
</dbReference>
<dbReference type="FunFam" id="3.40.50.720:FF:000019">
    <property type="entry name" value="Glycerol-3-phosphate dehydrogenase [NAD(P)+]"/>
    <property type="match status" value="1"/>
</dbReference>
<dbReference type="Gene3D" id="1.10.1040.10">
    <property type="entry name" value="N-(1-d-carboxylethyl)-l-norvaline Dehydrogenase, domain 2"/>
    <property type="match status" value="1"/>
</dbReference>
<dbReference type="Gene3D" id="3.40.50.720">
    <property type="entry name" value="NAD(P)-binding Rossmann-like Domain"/>
    <property type="match status" value="1"/>
</dbReference>
<dbReference type="HAMAP" id="MF_00394">
    <property type="entry name" value="NAD_Glyc3P_dehydrog"/>
    <property type="match status" value="1"/>
</dbReference>
<dbReference type="InterPro" id="IPR008927">
    <property type="entry name" value="6-PGluconate_DH-like_C_sf"/>
</dbReference>
<dbReference type="InterPro" id="IPR013328">
    <property type="entry name" value="6PGD_dom2"/>
</dbReference>
<dbReference type="InterPro" id="IPR006168">
    <property type="entry name" value="G3P_DH_NAD-dep"/>
</dbReference>
<dbReference type="InterPro" id="IPR006109">
    <property type="entry name" value="G3P_DH_NAD-dep_C"/>
</dbReference>
<dbReference type="InterPro" id="IPR011128">
    <property type="entry name" value="G3P_DH_NAD-dep_N"/>
</dbReference>
<dbReference type="InterPro" id="IPR036291">
    <property type="entry name" value="NAD(P)-bd_dom_sf"/>
</dbReference>
<dbReference type="NCBIfam" id="NF000940">
    <property type="entry name" value="PRK00094.1-2"/>
    <property type="match status" value="1"/>
</dbReference>
<dbReference type="NCBIfam" id="NF000941">
    <property type="entry name" value="PRK00094.1-3"/>
    <property type="match status" value="1"/>
</dbReference>
<dbReference type="NCBIfam" id="NF000942">
    <property type="entry name" value="PRK00094.1-4"/>
    <property type="match status" value="1"/>
</dbReference>
<dbReference type="PANTHER" id="PTHR11728">
    <property type="entry name" value="GLYCEROL-3-PHOSPHATE DEHYDROGENASE"/>
    <property type="match status" value="1"/>
</dbReference>
<dbReference type="PANTHER" id="PTHR11728:SF1">
    <property type="entry name" value="GLYCEROL-3-PHOSPHATE DEHYDROGENASE [NAD(+)] 2, CHLOROPLASTIC"/>
    <property type="match status" value="1"/>
</dbReference>
<dbReference type="Pfam" id="PF07479">
    <property type="entry name" value="NAD_Gly3P_dh_C"/>
    <property type="match status" value="1"/>
</dbReference>
<dbReference type="Pfam" id="PF01210">
    <property type="entry name" value="NAD_Gly3P_dh_N"/>
    <property type="match status" value="1"/>
</dbReference>
<dbReference type="PIRSF" id="PIRSF000114">
    <property type="entry name" value="Glycerol-3-P_dh"/>
    <property type="match status" value="1"/>
</dbReference>
<dbReference type="PRINTS" id="PR00077">
    <property type="entry name" value="GPDHDRGNASE"/>
</dbReference>
<dbReference type="SUPFAM" id="SSF48179">
    <property type="entry name" value="6-phosphogluconate dehydrogenase C-terminal domain-like"/>
    <property type="match status" value="1"/>
</dbReference>
<dbReference type="SUPFAM" id="SSF51735">
    <property type="entry name" value="NAD(P)-binding Rossmann-fold domains"/>
    <property type="match status" value="1"/>
</dbReference>
<dbReference type="PROSITE" id="PS00957">
    <property type="entry name" value="NAD_G3PDH"/>
    <property type="match status" value="1"/>
</dbReference>
<name>GPDA_BACHK</name>
<proteinExistence type="inferred from homology"/>
<keyword id="KW-0963">Cytoplasm</keyword>
<keyword id="KW-0444">Lipid biosynthesis</keyword>
<keyword id="KW-0443">Lipid metabolism</keyword>
<keyword id="KW-0520">NAD</keyword>
<keyword id="KW-0521">NADP</keyword>
<keyword id="KW-0547">Nucleotide-binding</keyword>
<keyword id="KW-0560">Oxidoreductase</keyword>
<keyword id="KW-0594">Phospholipid biosynthesis</keyword>
<keyword id="KW-1208">Phospholipid metabolism</keyword>
<feature type="chain" id="PRO_0000137924" description="Glycerol-3-phosphate dehydrogenase [NAD(P)+]">
    <location>
        <begin position="1"/>
        <end position="340"/>
    </location>
</feature>
<feature type="active site" description="Proton acceptor" evidence="1">
    <location>
        <position position="192"/>
    </location>
</feature>
<feature type="binding site" evidence="1">
    <location>
        <position position="11"/>
    </location>
    <ligand>
        <name>NADPH</name>
        <dbReference type="ChEBI" id="CHEBI:57783"/>
    </ligand>
</feature>
<feature type="binding site" evidence="1">
    <location>
        <position position="12"/>
    </location>
    <ligand>
        <name>NADPH</name>
        <dbReference type="ChEBI" id="CHEBI:57783"/>
    </ligand>
</feature>
<feature type="binding site" evidence="1">
    <location>
        <position position="33"/>
    </location>
    <ligand>
        <name>NADPH</name>
        <dbReference type="ChEBI" id="CHEBI:57783"/>
    </ligand>
</feature>
<feature type="binding site" evidence="1">
    <location>
        <position position="106"/>
    </location>
    <ligand>
        <name>NADPH</name>
        <dbReference type="ChEBI" id="CHEBI:57783"/>
    </ligand>
</feature>
<feature type="binding site" evidence="1">
    <location>
        <position position="106"/>
    </location>
    <ligand>
        <name>sn-glycerol 3-phosphate</name>
        <dbReference type="ChEBI" id="CHEBI:57597"/>
    </ligand>
</feature>
<feature type="binding site" evidence="1">
    <location>
        <position position="137"/>
    </location>
    <ligand>
        <name>sn-glycerol 3-phosphate</name>
        <dbReference type="ChEBI" id="CHEBI:57597"/>
    </ligand>
</feature>
<feature type="binding site" evidence="1">
    <location>
        <position position="139"/>
    </location>
    <ligand>
        <name>sn-glycerol 3-phosphate</name>
        <dbReference type="ChEBI" id="CHEBI:57597"/>
    </ligand>
</feature>
<feature type="binding site" evidence="1">
    <location>
        <position position="141"/>
    </location>
    <ligand>
        <name>NADPH</name>
        <dbReference type="ChEBI" id="CHEBI:57783"/>
    </ligand>
</feature>
<feature type="binding site" evidence="1">
    <location>
        <position position="192"/>
    </location>
    <ligand>
        <name>sn-glycerol 3-phosphate</name>
        <dbReference type="ChEBI" id="CHEBI:57597"/>
    </ligand>
</feature>
<feature type="binding site" evidence="1">
    <location>
        <position position="245"/>
    </location>
    <ligand>
        <name>sn-glycerol 3-phosphate</name>
        <dbReference type="ChEBI" id="CHEBI:57597"/>
    </ligand>
</feature>
<feature type="binding site" evidence="1">
    <location>
        <position position="255"/>
    </location>
    <ligand>
        <name>sn-glycerol 3-phosphate</name>
        <dbReference type="ChEBI" id="CHEBI:57597"/>
    </ligand>
</feature>
<feature type="binding site" evidence="1">
    <location>
        <position position="256"/>
    </location>
    <ligand>
        <name>NADPH</name>
        <dbReference type="ChEBI" id="CHEBI:57783"/>
    </ligand>
</feature>
<feature type="binding site" evidence="1">
    <location>
        <position position="256"/>
    </location>
    <ligand>
        <name>sn-glycerol 3-phosphate</name>
        <dbReference type="ChEBI" id="CHEBI:57597"/>
    </ligand>
</feature>
<feature type="binding site" evidence="1">
    <location>
        <position position="257"/>
    </location>
    <ligand>
        <name>sn-glycerol 3-phosphate</name>
        <dbReference type="ChEBI" id="CHEBI:57597"/>
    </ligand>
</feature>
<feature type="binding site" evidence="1">
    <location>
        <position position="280"/>
    </location>
    <ligand>
        <name>NADPH</name>
        <dbReference type="ChEBI" id="CHEBI:57783"/>
    </ligand>
</feature>
<feature type="binding site" evidence="1">
    <location>
        <position position="282"/>
    </location>
    <ligand>
        <name>NADPH</name>
        <dbReference type="ChEBI" id="CHEBI:57783"/>
    </ligand>
</feature>
<protein>
    <recommendedName>
        <fullName evidence="1">Glycerol-3-phosphate dehydrogenase [NAD(P)+]</fullName>
        <ecNumber evidence="1">1.1.1.94</ecNumber>
    </recommendedName>
    <alternativeName>
        <fullName evidence="1">NAD(P)(+)-dependent glycerol-3-phosphate dehydrogenase</fullName>
    </alternativeName>
    <alternativeName>
        <fullName evidence="1">NAD(P)H-dependent dihydroxyacetone-phosphate reductase</fullName>
    </alternativeName>
</protein>
<comment type="function">
    <text evidence="1">Catalyzes the reduction of the glycolytic intermediate dihydroxyacetone phosphate (DHAP) to sn-glycerol 3-phosphate (G3P), the key precursor for phospholipid synthesis.</text>
</comment>
<comment type="catalytic activity">
    <reaction evidence="1">
        <text>sn-glycerol 3-phosphate + NAD(+) = dihydroxyacetone phosphate + NADH + H(+)</text>
        <dbReference type="Rhea" id="RHEA:11092"/>
        <dbReference type="ChEBI" id="CHEBI:15378"/>
        <dbReference type="ChEBI" id="CHEBI:57540"/>
        <dbReference type="ChEBI" id="CHEBI:57597"/>
        <dbReference type="ChEBI" id="CHEBI:57642"/>
        <dbReference type="ChEBI" id="CHEBI:57945"/>
        <dbReference type="EC" id="1.1.1.94"/>
    </reaction>
    <physiologicalReaction direction="right-to-left" evidence="1">
        <dbReference type="Rhea" id="RHEA:11094"/>
    </physiologicalReaction>
</comment>
<comment type="catalytic activity">
    <reaction evidence="1">
        <text>sn-glycerol 3-phosphate + NADP(+) = dihydroxyacetone phosphate + NADPH + H(+)</text>
        <dbReference type="Rhea" id="RHEA:11096"/>
        <dbReference type="ChEBI" id="CHEBI:15378"/>
        <dbReference type="ChEBI" id="CHEBI:57597"/>
        <dbReference type="ChEBI" id="CHEBI:57642"/>
        <dbReference type="ChEBI" id="CHEBI:57783"/>
        <dbReference type="ChEBI" id="CHEBI:58349"/>
        <dbReference type="EC" id="1.1.1.94"/>
    </reaction>
    <physiologicalReaction direction="right-to-left" evidence="1">
        <dbReference type="Rhea" id="RHEA:11098"/>
    </physiologicalReaction>
</comment>
<comment type="pathway">
    <text evidence="1">Membrane lipid metabolism; glycerophospholipid metabolism.</text>
</comment>
<comment type="subcellular location">
    <subcellularLocation>
        <location evidence="1">Cytoplasm</location>
    </subcellularLocation>
</comment>
<comment type="similarity">
    <text evidence="1">Belongs to the NAD-dependent glycerol-3-phosphate dehydrogenase family.</text>
</comment>
<gene>
    <name evidence="1" type="primary">gpsA</name>
    <name type="ordered locus">BT9727_1387</name>
</gene>
<accession>Q6HL50</accession>
<sequence length="340" mass="36593">MTKITVVGAGSWGTALAMVLADNGHDVRIWGNRSELMDEINTKHENSRYLPGITLPSTIVAYSSLEEALVDVNVVLLVVPTKAYREVLQDMKKYVAGPTTWIHASKGIEPGTSKRISEVIEEEIPEDLIKDVVVLSGPSHAEEVGLRQATTVTSAAKRMEAAEEVQDLFMNSYFRVYTNPDIVGVELGGALKNIIALAAGITDGLGLGDNAKAALMTRGLTEIARLGRKMGGNPLTFAGLTGMGDLIVTCTSVHSRNWRAGNMLGKGHSLEEVLESMGMVVEGVRTTKAAHELAEKMEVEMPITAALYDVLFNGNNVKDAVGSLMGRVRKHEVEAIPDLL</sequence>